<organismHost>
    <name type="scientific">Bos taurus</name>
    <name type="common">Bovine</name>
    <dbReference type="NCBI Taxonomy" id="9913"/>
</organismHost>
<organism>
    <name type="scientific">Vaccinia virus (strain Western Reserve)</name>
    <name type="common">VACV</name>
    <name type="synonym">Vaccinia virus (strain WR)</name>
    <dbReference type="NCBI Taxonomy" id="10254"/>
    <lineage>
        <taxon>Viruses</taxon>
        <taxon>Varidnaviria</taxon>
        <taxon>Bamfordvirae</taxon>
        <taxon>Nucleocytoviricota</taxon>
        <taxon>Pokkesviricetes</taxon>
        <taxon>Chitovirales</taxon>
        <taxon>Poxviridae</taxon>
        <taxon>Chordopoxvirinae</taxon>
        <taxon>Orthopoxvirus</taxon>
        <taxon>Vaccinia virus</taxon>
    </lineage>
</organism>
<proteinExistence type="evidence at protein level"/>
<keyword id="KW-0002">3D-structure</keyword>
<keyword id="KW-0007">Acetylation</keyword>
<keyword id="KW-1015">Disulfide bond</keyword>
<keyword id="KW-0244">Early protein</keyword>
<keyword id="KW-1185">Reference proteome</keyword>
<feature type="chain" id="PRO_0000099444" description="Protein OPG064">
    <location>
        <begin position="1"/>
        <end position="737"/>
    </location>
</feature>
<feature type="modified residue" description="N-acetylmethionine; by host" evidence="4 6">
    <location>
        <position position="1"/>
    </location>
</feature>
<feature type="disulfide bond" evidence="4 6">
    <location>
        <begin position="496"/>
        <end position="535"/>
    </location>
</feature>
<feature type="helix" evidence="7">
    <location>
        <begin position="5"/>
        <end position="13"/>
    </location>
</feature>
<feature type="helix" evidence="7">
    <location>
        <begin position="19"/>
        <end position="24"/>
    </location>
</feature>
<feature type="helix" evidence="7">
    <location>
        <begin position="28"/>
        <end position="36"/>
    </location>
</feature>
<feature type="helix" evidence="7">
    <location>
        <begin position="46"/>
        <end position="48"/>
    </location>
</feature>
<feature type="helix" evidence="7">
    <location>
        <begin position="49"/>
        <end position="55"/>
    </location>
</feature>
<feature type="helix" evidence="7">
    <location>
        <begin position="57"/>
        <end position="62"/>
    </location>
</feature>
<feature type="turn" evidence="7">
    <location>
        <begin position="65"/>
        <end position="67"/>
    </location>
</feature>
<feature type="helix" evidence="7">
    <location>
        <begin position="70"/>
        <end position="79"/>
    </location>
</feature>
<feature type="helix" evidence="7">
    <location>
        <begin position="84"/>
        <end position="86"/>
    </location>
</feature>
<feature type="helix" evidence="7">
    <location>
        <begin position="87"/>
        <end position="92"/>
    </location>
</feature>
<feature type="helix" evidence="7">
    <location>
        <begin position="94"/>
        <end position="99"/>
    </location>
</feature>
<feature type="helix" evidence="7">
    <location>
        <begin position="103"/>
        <end position="109"/>
    </location>
</feature>
<feature type="helix" evidence="7">
    <location>
        <begin position="110"/>
        <end position="112"/>
    </location>
</feature>
<feature type="helix" evidence="7">
    <location>
        <begin position="117"/>
        <end position="126"/>
    </location>
</feature>
<feature type="turn" evidence="7">
    <location>
        <begin position="127"/>
        <end position="129"/>
    </location>
</feature>
<feature type="helix" evidence="7">
    <location>
        <begin position="132"/>
        <end position="137"/>
    </location>
</feature>
<feature type="helix" evidence="7">
    <location>
        <begin position="142"/>
        <end position="146"/>
    </location>
</feature>
<feature type="helix" evidence="7">
    <location>
        <begin position="154"/>
        <end position="163"/>
    </location>
</feature>
<feature type="helix" evidence="7">
    <location>
        <begin position="165"/>
        <end position="167"/>
    </location>
</feature>
<feature type="helix" evidence="7">
    <location>
        <begin position="168"/>
        <end position="174"/>
    </location>
</feature>
<feature type="helix" evidence="7">
    <location>
        <begin position="179"/>
        <end position="189"/>
    </location>
</feature>
<feature type="helix" evidence="7">
    <location>
        <begin position="204"/>
        <end position="213"/>
    </location>
</feature>
<feature type="helix" evidence="7">
    <location>
        <begin position="217"/>
        <end position="230"/>
    </location>
</feature>
<feature type="helix" evidence="7">
    <location>
        <begin position="235"/>
        <end position="246"/>
    </location>
</feature>
<feature type="helix" evidence="7">
    <location>
        <begin position="251"/>
        <end position="253"/>
    </location>
</feature>
<feature type="helix" evidence="7">
    <location>
        <begin position="254"/>
        <end position="260"/>
    </location>
</feature>
<feature type="helix" evidence="7">
    <location>
        <begin position="262"/>
        <end position="264"/>
    </location>
</feature>
<feature type="helix" evidence="7">
    <location>
        <begin position="265"/>
        <end position="268"/>
    </location>
</feature>
<feature type="helix" evidence="7">
    <location>
        <begin position="269"/>
        <end position="271"/>
    </location>
</feature>
<feature type="helix" evidence="7">
    <location>
        <begin position="272"/>
        <end position="275"/>
    </location>
</feature>
<feature type="helix" evidence="7">
    <location>
        <begin position="282"/>
        <end position="284"/>
    </location>
</feature>
<feature type="helix" evidence="7">
    <location>
        <begin position="289"/>
        <end position="296"/>
    </location>
</feature>
<feature type="helix" evidence="7">
    <location>
        <begin position="297"/>
        <end position="301"/>
    </location>
</feature>
<feature type="helix" evidence="7">
    <location>
        <begin position="303"/>
        <end position="305"/>
    </location>
</feature>
<feature type="helix" evidence="7">
    <location>
        <begin position="306"/>
        <end position="315"/>
    </location>
</feature>
<feature type="helix" evidence="7">
    <location>
        <begin position="319"/>
        <end position="324"/>
    </location>
</feature>
<feature type="helix" evidence="7">
    <location>
        <begin position="326"/>
        <end position="328"/>
    </location>
</feature>
<feature type="helix" evidence="7">
    <location>
        <begin position="330"/>
        <end position="332"/>
    </location>
</feature>
<feature type="helix" evidence="7">
    <location>
        <begin position="335"/>
        <end position="344"/>
    </location>
</feature>
<feature type="helix" evidence="7">
    <location>
        <begin position="351"/>
        <end position="353"/>
    </location>
</feature>
<feature type="helix" evidence="7">
    <location>
        <begin position="359"/>
        <end position="367"/>
    </location>
</feature>
<feature type="helix" evidence="7">
    <location>
        <begin position="373"/>
        <end position="378"/>
    </location>
</feature>
<feature type="helix" evidence="7">
    <location>
        <begin position="382"/>
        <end position="387"/>
    </location>
</feature>
<feature type="helix" evidence="7">
    <location>
        <begin position="395"/>
        <end position="398"/>
    </location>
</feature>
<feature type="helix" evidence="7">
    <location>
        <begin position="402"/>
        <end position="405"/>
    </location>
</feature>
<feature type="helix" evidence="7">
    <location>
        <begin position="407"/>
        <end position="417"/>
    </location>
</feature>
<feature type="helix" evidence="7">
    <location>
        <begin position="421"/>
        <end position="429"/>
    </location>
</feature>
<feature type="helix" evidence="7">
    <location>
        <begin position="435"/>
        <end position="446"/>
    </location>
</feature>
<feature type="helix" evidence="7">
    <location>
        <begin position="452"/>
        <end position="454"/>
    </location>
</feature>
<feature type="turn" evidence="7">
    <location>
        <begin position="455"/>
        <end position="457"/>
    </location>
</feature>
<feature type="helix" evidence="7">
    <location>
        <begin position="458"/>
        <end position="460"/>
    </location>
</feature>
<feature type="helix" evidence="7">
    <location>
        <begin position="462"/>
        <end position="467"/>
    </location>
</feature>
<feature type="strand" evidence="7">
    <location>
        <begin position="493"/>
        <end position="498"/>
    </location>
</feature>
<feature type="helix" evidence="7">
    <location>
        <begin position="503"/>
        <end position="513"/>
    </location>
</feature>
<feature type="strand" evidence="7">
    <location>
        <begin position="522"/>
        <end position="530"/>
    </location>
</feature>
<feature type="strand" evidence="7">
    <location>
        <begin position="533"/>
        <end position="541"/>
    </location>
</feature>
<feature type="helix" evidence="7">
    <location>
        <begin position="547"/>
        <end position="563"/>
    </location>
</feature>
<feature type="strand" evidence="7">
    <location>
        <begin position="566"/>
        <end position="568"/>
    </location>
</feature>
<feature type="turn" evidence="7">
    <location>
        <begin position="571"/>
        <end position="573"/>
    </location>
</feature>
<feature type="helix" evidence="7">
    <location>
        <begin position="579"/>
        <end position="584"/>
    </location>
</feature>
<feature type="strand" evidence="7">
    <location>
        <begin position="593"/>
        <end position="596"/>
    </location>
</feature>
<feature type="helix" evidence="7">
    <location>
        <begin position="603"/>
        <end position="605"/>
    </location>
</feature>
<feature type="strand" evidence="7">
    <location>
        <begin position="608"/>
        <end position="610"/>
    </location>
</feature>
<feature type="helix" evidence="7">
    <location>
        <begin position="611"/>
        <end position="621"/>
    </location>
</feature>
<feature type="helix" evidence="7">
    <location>
        <begin position="630"/>
        <end position="652"/>
    </location>
</feature>
<feature type="helix" evidence="7">
    <location>
        <begin position="657"/>
        <end position="671"/>
    </location>
</feature>
<feature type="helix" evidence="7">
    <location>
        <begin position="683"/>
        <end position="699"/>
    </location>
</feature>
<feature type="strand" evidence="7">
    <location>
        <begin position="701"/>
        <end position="705"/>
    </location>
</feature>
<feature type="helix" evidence="7">
    <location>
        <begin position="712"/>
        <end position="731"/>
    </location>
</feature>
<dbReference type="EMBL" id="AY243312">
    <property type="protein sequence ID" value="AAO89337.1"/>
    <property type="molecule type" value="Genomic_DNA"/>
</dbReference>
<dbReference type="EMBL" id="M36339">
    <property type="protein sequence ID" value="AAB59822.1"/>
    <property type="molecule type" value="Genomic_DNA"/>
</dbReference>
<dbReference type="PIR" id="A35928">
    <property type="entry name" value="A35928"/>
</dbReference>
<dbReference type="RefSeq" id="YP_232940.1">
    <property type="nucleotide sequence ID" value="NC_006998.1"/>
</dbReference>
<dbReference type="PDB" id="7PHY">
    <property type="method" value="X-ray"/>
    <property type="resolution" value="2.30 A"/>
    <property type="chains" value="A=1-737"/>
</dbReference>
<dbReference type="PDBsum" id="7PHY"/>
<dbReference type="SMR" id="P21604"/>
<dbReference type="iPTMnet" id="P21604"/>
<dbReference type="DNASU" id="3707591"/>
<dbReference type="GeneID" id="3707591"/>
<dbReference type="KEGG" id="vg:3707591"/>
<dbReference type="Proteomes" id="UP000000344">
    <property type="component" value="Genome"/>
</dbReference>
<dbReference type="GO" id="GO:0043657">
    <property type="term" value="C:host cell"/>
    <property type="evidence" value="ECO:0007669"/>
    <property type="project" value="GOC"/>
</dbReference>
<dbReference type="GO" id="GO:0039701">
    <property type="term" value="P:microtubule-dependent intracellular transport of viral material towards cell periphery"/>
    <property type="evidence" value="ECO:0000314"/>
    <property type="project" value="UniProtKB"/>
</dbReference>
<dbReference type="InterPro" id="IPR007585">
    <property type="entry name" value="Poxvirus_E2"/>
</dbReference>
<dbReference type="InterPro" id="IPR021155">
    <property type="entry name" value="Poxvirus_E2/O1"/>
</dbReference>
<dbReference type="Pfam" id="PF04497">
    <property type="entry name" value="Pox_E2-like"/>
    <property type="match status" value="1"/>
</dbReference>
<dbReference type="PIRSF" id="PIRSF015692">
    <property type="entry name" value="VAC_E2L"/>
    <property type="match status" value="1"/>
</dbReference>
<reference key="1">
    <citation type="journal article" date="1982" name="Cell">
        <title>Incompletely base-paired flip-flop terminal loops link the two DNA strands of the vaccinia virus genome into one uninterrupted polynucleotide chain.</title>
        <authorList>
            <person name="Baroudy B.M."/>
            <person name="Venkatesan S."/>
            <person name="Moss B."/>
        </authorList>
    </citation>
    <scope>NUCLEOTIDE SEQUENCE [GENOMIC DNA]</scope>
</reference>
<reference key="2">
    <citation type="submission" date="1990-07" db="EMBL/GenBank/DDBJ databases">
        <authorList>
            <person name="Gershon P.D."/>
            <person name="Jones E.V."/>
            <person name="Moss B."/>
            <person name="Ahn B.-Y."/>
        </authorList>
    </citation>
    <scope>NUCLEOTIDE SEQUENCE [GENOMIC DNA]</scope>
</reference>
<reference key="3">
    <citation type="submission" date="2003-02" db="EMBL/GenBank/DDBJ databases">
        <title>Sequencing of the coding region of Vaccinia-WR to an average 9-fold redundancy and an error rate of 0.16/10kb.</title>
        <authorList>
            <person name="Esposito J.J."/>
            <person name="Frace A.M."/>
            <person name="Sammons S.A."/>
            <person name="Olsen-Rasmussen M."/>
            <person name="Osborne J."/>
            <person name="Wohlhueter R."/>
        </authorList>
    </citation>
    <scope>NUCLEOTIDE SEQUENCE [LARGE SCALE GENOMIC DNA]</scope>
</reference>
<reference key="4">
    <citation type="journal article" date="1990" name="Mol. Cell. Biol.">
        <title>Identification of rpo30, a vaccinia virus RNA polymerase gene with structural similarity to a eucaryotic transcription elongation factor.</title>
        <authorList>
            <person name="Ahn B.-Y."/>
            <person name="Gershon P.D."/>
            <person name="Jones E.V."/>
            <person name="Moss B."/>
        </authorList>
    </citation>
    <scope>NUCLEOTIDE SEQUENCE [GENOMIC DNA] OF 1-597</scope>
</reference>
<reference key="5">
    <citation type="journal article" date="2009" name="Cell. Microbiol.">
        <title>An E2-F12 complex is required for intracellular enveloped virus morphogenesis during vaccinia infection.</title>
        <authorList>
            <person name="Dodding M.P."/>
            <person name="Newsome T.P."/>
            <person name="Collinson L.M."/>
            <person name="Edwards C."/>
            <person name="Way M."/>
        </authorList>
    </citation>
    <scope>INTERACTION WITH PROTEIN OPG056/F12</scope>
    <scope>FUNCTION</scope>
</reference>
<reference key="6">
    <citation type="journal article" date="2015" name="PLoS Pathog.">
        <title>Vaccinia virus protein complex F12/E2 interacts with kinesin light chain isoform 2 to engage the kinesin-1 motor complex.</title>
        <authorList>
            <person name="Carpentier D.C."/>
            <person name="Gao W.N."/>
            <person name="Ewles H."/>
            <person name="Morgan G.W."/>
            <person name="Smith G.L."/>
        </authorList>
    </citation>
    <scope>FUNCTION</scope>
    <scope>INTERACTION WITH HOST KLC2</scope>
</reference>
<reference key="7">
    <citation type="journal article" date="2015" name="J. Virol.">
        <title>Deciphering poxvirus gene expression by RNA sequencing and ribosome profiling.</title>
        <authorList>
            <person name="Yang Z."/>
            <person name="Cao S."/>
            <person name="Martens C.A."/>
            <person name="Porcella S.F."/>
            <person name="Xie Z."/>
            <person name="Ma M."/>
            <person name="Shen B."/>
            <person name="Moss B."/>
        </authorList>
    </citation>
    <scope>INDUCTION</scope>
</reference>
<reference evidence="6" key="8">
    <citation type="journal article" date="2022" name="J. Gen. Virol.">
        <title>The crystal structure of vaccinia virus protein E2 and perspectives on the prediction of novel viral protein folds.</title>
        <authorList>
            <person name="Gao W.N.D."/>
            <person name="Gao C."/>
            <person name="Deane J.E."/>
            <person name="Carpentier D.C.J."/>
            <person name="Smith G.L."/>
            <person name="Graham S.C."/>
        </authorList>
    </citation>
    <scope>X-RAY CRYSTALLOGRAPHY (2.30 ANGSTROMS)</scope>
    <scope>ACETYLATION AT MET-1</scope>
    <scope>DISULFIDE BOND</scope>
</reference>
<accession>P21604</accession>
<accession>Q76ZW3</accession>
<name>PG064_VACCW</name>
<gene>
    <name type="primary">OPG064</name>
    <name type="ordered locus">VACWR058</name>
    <name type="ORF">E2L</name>
</gene>
<evidence type="ECO:0000269" key="1">
    <source>
    </source>
</evidence>
<evidence type="ECO:0000269" key="2">
    <source>
    </source>
</evidence>
<evidence type="ECO:0000269" key="3">
    <source>
    </source>
</evidence>
<evidence type="ECO:0000269" key="4">
    <source>
    </source>
</evidence>
<evidence type="ECO:0000305" key="5"/>
<evidence type="ECO:0007744" key="6">
    <source>
        <dbReference type="PDB" id="7PHY"/>
    </source>
</evidence>
<evidence type="ECO:0007829" key="7">
    <source>
        <dbReference type="PDB" id="7PHY"/>
    </source>
</evidence>
<sequence length="737" mass="85958">MISVTDIRRAFLDNECHTITKAFGYLHEDKAIALIKIGFHPTYLPKVLYNNVVEFVPEKLYLFKPRTVAPLDLISTITKLKNVDKFASHINYHKNSILITGDKSLIVKCMPYMIISDDDIRFIREQFVGTNSIEYILSFINKESIYRMSYQFSENEIVTIINRDHFMYEPIYEHQVLDSDFLKTMLDRYGIVPINSGIIDELCPEAIIEILMAVVRPRDAIRFLDIVNKNQLTEDSVKNYIINDIRRGKIDYYIPYVEDFLEDRTEDLGIYANIFFEDAIDITKLDITKTELEHISKYMNYYTTYIDHIVNIILQNNYIDILASIIDYVQDVLTEELCIRIVCESTNPVPVTSLPIHSTLVMVMCIQMKYVDIVEFLDEIDIDTLIEKGADPITEYTFTTRWYNKHNDLITLYIKKYGFCPMMMKRLMFEYPLTKEASDHLLKTMDENRGAIMFFPRTICTLPYLLCCNYKLIQKPIPFKEENRNIVYKKNNRVLCFDSLENSAFKSLIKIDSIPGLKTYNMKDITYEKSNNIICVRFIPQESIHNEERRIKLQLFDIARLASYGLYYIPSRYLSSWTPVVNMIEGREYTNPQKIECLVILDLFSEEFIEYQNLGNAVSNKYELEYTISNYQAAINCLMSTLLIYLVLGSIRSISRTENFVLSILNIFYKGLKINELLSEPVSGVCIELNKIKDRASSGDSSFIFLKKNELSKTLSLCEKVCVETILDNNQSFKSSK</sequence>
<comment type="function">
    <text evidence="1">Plays a role in intracellular enveloped virus (IEV) transport to the cell surface on microtubules. Together with protein OPG056/F12, forms a complex that interacts with host KLC2 (kinesin light chain isoform 2) to engage the kinesin-1 complex and thereby promote IEV trafficking.</text>
</comment>
<comment type="subunit">
    <text evidence="1 2">Interacts with host KLC2; this interaction promotes IEV trafficking by engaging the host kinesin-1 complex. Interacts with protein OPG056/F12.</text>
</comment>
<comment type="induction">
    <text evidence="3">Expressed in the early phase of the viral replicative cycle.</text>
</comment>
<comment type="PTM">
    <text evidence="4">N-acetylated on initiator methionine by host.</text>
</comment>
<comment type="similarity">
    <text evidence="5">Belongs to the orthopoxvirus OPG064 family.</text>
</comment>
<protein>
    <recommendedName>
        <fullName>Protein OPG064</fullName>
    </recommendedName>
    <alternativeName>
        <fullName>Protein E2</fullName>
    </alternativeName>
</protein>